<reference key="1">
    <citation type="journal article" date="2003" name="Mol. Microbiol.">
        <title>Genome-based analysis of virulence genes in a non-biofilm-forming Staphylococcus epidermidis strain (ATCC 12228).</title>
        <authorList>
            <person name="Zhang Y.-Q."/>
            <person name="Ren S.-X."/>
            <person name="Li H.-L."/>
            <person name="Wang Y.-X."/>
            <person name="Fu G."/>
            <person name="Yang J."/>
            <person name="Qin Z.-Q."/>
            <person name="Miao Y.-G."/>
            <person name="Wang W.-Y."/>
            <person name="Chen R.-S."/>
            <person name="Shen Y."/>
            <person name="Chen Z."/>
            <person name="Yuan Z.-H."/>
            <person name="Zhao G.-P."/>
            <person name="Qu D."/>
            <person name="Danchin A."/>
            <person name="Wen Y.-M."/>
        </authorList>
    </citation>
    <scope>NUCLEOTIDE SEQUENCE [LARGE SCALE GENOMIC DNA]</scope>
    <source>
        <strain>ATCC 12228 / FDA PCI 1200</strain>
    </source>
</reference>
<evidence type="ECO:0000255" key="1">
    <source>
        <dbReference type="HAMAP-Rule" id="MF_00937"/>
    </source>
</evidence>
<evidence type="ECO:0000255" key="2">
    <source>
        <dbReference type="PROSITE-ProRule" id="PRU01384"/>
    </source>
</evidence>
<sequence>MSEIIQDLSLEDVIGDRFGRYSKYIIQERALPDVRDGLKPVQRRILFAMYSSGNTYDKNFRKSAKTVGDVIGQYHPHGDSSVYDAMVRLSQDWKLRHVLIEMHGNNGSIDNDPPAAMRYTEAKLSQLSEELLRDINKETVSFIPNYDDTTLEPMVLPARFPNLLINGSTGISSGYATDIPPHNLAEVIQGTLKYIDQPDITINQLMKYIKGPDFPTGGIIQGIEGIKKAYETGKGKVVVRSRVDEEPLRSGRKQLIVTEIPYEVNKSSLVKKIDELRADKKVDGIVEVRDETDRTGLRIAIELKKDANSESIKNYLYKNSDLQISYNFNMVAISEGRPKLMGLREIIESYLNHQIEVVTNRTRYDLEQAEKRMHIVEGLMKALSILDEVIALIRNSKNKKDAKDNLVAEYDFTEAQAEAIVMLQLYRLTNTDIEALKKEHEELEALIKELRNILDNHEALLAVIKDELNEIKKKFKVDRLSTIEAEISEIKIDKEVMVPSEEVILSLTQHGYIKRTSTRSFNASGVTEIGLKDGDRLLKHESVNTQDTVLVFTNKGRYLFIPVHKLADIRWKELGQHISQIVPIDEDEEVVNVYNEKDFKNEAFYIMATKNGMIKKSSASQFKTTRFNKPLINMKVKDKDELINVVRLESDQLITVLTHKGMSLTYSTNELSDTGLRAAGVKSINLKDEDYVVMTEDVNDSDSIIMVTQRGAMKRIDFNVLQEAKRAQRGITLLKELKKKPHRIVAGAVVKENHTKYIVFSQHHEEYGNIDDVHLSEQYTNGSFIIDTDDFGEVESMILE</sequence>
<feature type="chain" id="PRO_0000145416" description="DNA topoisomerase 4 subunit A">
    <location>
        <begin position="1"/>
        <end position="800"/>
    </location>
</feature>
<feature type="domain" description="Topo IIA-type catalytic" evidence="2">
    <location>
        <begin position="31"/>
        <end position="496"/>
    </location>
</feature>
<feature type="active site" description="O-(5'-phospho-DNA)-tyrosine intermediate" evidence="1">
    <location>
        <position position="119"/>
    </location>
</feature>
<feature type="site" description="Interaction with DNA" evidence="1">
    <location>
        <position position="39"/>
    </location>
</feature>
<feature type="site" description="Interaction with DNA" evidence="1">
    <location>
        <position position="75"/>
    </location>
</feature>
<feature type="site" description="Interaction with DNA" evidence="1">
    <location>
        <position position="77"/>
    </location>
</feature>
<feature type="site" description="Interaction with DNA" evidence="1">
    <location>
        <position position="88"/>
    </location>
</feature>
<feature type="site" description="Interaction with DNA" evidence="1">
    <location>
        <position position="94"/>
    </location>
</feature>
<feature type="site" description="Transition state stabilizer" evidence="1">
    <location>
        <position position="118"/>
    </location>
</feature>
<name>PARC_STAES</name>
<comment type="function">
    <text evidence="1">Topoisomerase IV is essential for chromosome segregation. It relaxes supercoiled DNA. Performs the decatenation events required during the replication of a circular DNA molecule.</text>
</comment>
<comment type="catalytic activity">
    <reaction evidence="1">
        <text>ATP-dependent breakage, passage and rejoining of double-stranded DNA.</text>
        <dbReference type="EC" id="5.6.2.2"/>
    </reaction>
</comment>
<comment type="subunit">
    <text evidence="1">Heterotetramer composed of ParC and ParE.</text>
</comment>
<comment type="subcellular location">
    <subcellularLocation>
        <location evidence="1">Cell membrane</location>
        <topology evidence="1">Peripheral membrane protein</topology>
    </subcellularLocation>
</comment>
<comment type="similarity">
    <text evidence="1">Belongs to the type II topoisomerase GyrA/ParC subunit family. ParC type 2 subfamily.</text>
</comment>
<accession>Q8CSN8</accession>
<organism>
    <name type="scientific">Staphylococcus epidermidis (strain ATCC 12228 / FDA PCI 1200)</name>
    <dbReference type="NCBI Taxonomy" id="176280"/>
    <lineage>
        <taxon>Bacteria</taxon>
        <taxon>Bacillati</taxon>
        <taxon>Bacillota</taxon>
        <taxon>Bacilli</taxon>
        <taxon>Bacillales</taxon>
        <taxon>Staphylococcaceae</taxon>
        <taxon>Staphylococcus</taxon>
    </lineage>
</organism>
<gene>
    <name evidence="1" type="primary">parC</name>
    <name type="ordered locus">SE_1037</name>
</gene>
<proteinExistence type="inferred from homology"/>
<dbReference type="EC" id="5.6.2.2" evidence="1"/>
<dbReference type="EMBL" id="AE015929">
    <property type="protein sequence ID" value="AAO04634.1"/>
    <property type="molecule type" value="Genomic_DNA"/>
</dbReference>
<dbReference type="RefSeq" id="NP_764592.1">
    <property type="nucleotide sequence ID" value="NC_004461.1"/>
</dbReference>
<dbReference type="RefSeq" id="WP_001831210.1">
    <property type="nucleotide sequence ID" value="NZ_WBME01000040.1"/>
</dbReference>
<dbReference type="SMR" id="Q8CSN8"/>
<dbReference type="KEGG" id="sep:SE_1037"/>
<dbReference type="PATRIC" id="fig|176280.10.peg.1012"/>
<dbReference type="eggNOG" id="COG0188">
    <property type="taxonomic scope" value="Bacteria"/>
</dbReference>
<dbReference type="HOGENOM" id="CLU_002977_6_1_9"/>
<dbReference type="OrthoDB" id="9806486at2"/>
<dbReference type="Proteomes" id="UP000001411">
    <property type="component" value="Chromosome"/>
</dbReference>
<dbReference type="GO" id="GO:0005694">
    <property type="term" value="C:chromosome"/>
    <property type="evidence" value="ECO:0007669"/>
    <property type="project" value="InterPro"/>
</dbReference>
<dbReference type="GO" id="GO:0005737">
    <property type="term" value="C:cytoplasm"/>
    <property type="evidence" value="ECO:0007669"/>
    <property type="project" value="TreeGrafter"/>
</dbReference>
<dbReference type="GO" id="GO:0009330">
    <property type="term" value="C:DNA topoisomerase type II (double strand cut, ATP-hydrolyzing) complex"/>
    <property type="evidence" value="ECO:0007669"/>
    <property type="project" value="TreeGrafter"/>
</dbReference>
<dbReference type="GO" id="GO:0019897">
    <property type="term" value="C:extrinsic component of plasma membrane"/>
    <property type="evidence" value="ECO:0007669"/>
    <property type="project" value="UniProtKB-UniRule"/>
</dbReference>
<dbReference type="GO" id="GO:0005524">
    <property type="term" value="F:ATP binding"/>
    <property type="evidence" value="ECO:0007669"/>
    <property type="project" value="InterPro"/>
</dbReference>
<dbReference type="GO" id="GO:0003677">
    <property type="term" value="F:DNA binding"/>
    <property type="evidence" value="ECO:0007669"/>
    <property type="project" value="UniProtKB-UniRule"/>
</dbReference>
<dbReference type="GO" id="GO:0034335">
    <property type="term" value="F:DNA negative supercoiling activity"/>
    <property type="evidence" value="ECO:0007669"/>
    <property type="project" value="UniProtKB-ARBA"/>
</dbReference>
<dbReference type="GO" id="GO:0007059">
    <property type="term" value="P:chromosome segregation"/>
    <property type="evidence" value="ECO:0007669"/>
    <property type="project" value="UniProtKB-UniRule"/>
</dbReference>
<dbReference type="GO" id="GO:0006265">
    <property type="term" value="P:DNA topological change"/>
    <property type="evidence" value="ECO:0007669"/>
    <property type="project" value="UniProtKB-UniRule"/>
</dbReference>
<dbReference type="CDD" id="cd00187">
    <property type="entry name" value="TOP4c"/>
    <property type="match status" value="1"/>
</dbReference>
<dbReference type="FunFam" id="1.10.268.10:FF:000001">
    <property type="entry name" value="DNA gyrase subunit A"/>
    <property type="match status" value="1"/>
</dbReference>
<dbReference type="FunFam" id="3.30.1360.40:FF:000002">
    <property type="entry name" value="DNA gyrase subunit A"/>
    <property type="match status" value="1"/>
</dbReference>
<dbReference type="FunFam" id="3.90.199.10:FF:000001">
    <property type="entry name" value="DNA gyrase subunit A"/>
    <property type="match status" value="1"/>
</dbReference>
<dbReference type="FunFam" id="2.120.10.90:FF:000005">
    <property type="entry name" value="DNA topoisomerase 4 subunit A"/>
    <property type="match status" value="1"/>
</dbReference>
<dbReference type="Gene3D" id="3.30.1360.40">
    <property type="match status" value="1"/>
</dbReference>
<dbReference type="Gene3D" id="2.120.10.90">
    <property type="entry name" value="DNA gyrase/topoisomerase IV, subunit A, C-terminal"/>
    <property type="match status" value="1"/>
</dbReference>
<dbReference type="Gene3D" id="3.90.199.10">
    <property type="entry name" value="Topoisomerase II, domain 5"/>
    <property type="match status" value="1"/>
</dbReference>
<dbReference type="Gene3D" id="1.10.268.10">
    <property type="entry name" value="Topoisomerase, domain 3"/>
    <property type="match status" value="1"/>
</dbReference>
<dbReference type="HAMAP" id="MF_00937">
    <property type="entry name" value="ParC_type2"/>
    <property type="match status" value="1"/>
</dbReference>
<dbReference type="InterPro" id="IPR006691">
    <property type="entry name" value="GyrA/parC_rep"/>
</dbReference>
<dbReference type="InterPro" id="IPR035516">
    <property type="entry name" value="Gyrase/topoIV_suA_C"/>
</dbReference>
<dbReference type="InterPro" id="IPR013760">
    <property type="entry name" value="Topo_IIA-like_dom_sf"/>
</dbReference>
<dbReference type="InterPro" id="IPR013758">
    <property type="entry name" value="Topo_IIA_A/C_ab"/>
</dbReference>
<dbReference type="InterPro" id="IPR013757">
    <property type="entry name" value="Topo_IIA_A_a_sf"/>
</dbReference>
<dbReference type="InterPro" id="IPR002205">
    <property type="entry name" value="Topo_IIA_dom_A"/>
</dbReference>
<dbReference type="InterPro" id="IPR005741">
    <property type="entry name" value="TopoIV_A_Gpos"/>
</dbReference>
<dbReference type="InterPro" id="IPR050220">
    <property type="entry name" value="Type_II_DNA_Topoisomerases"/>
</dbReference>
<dbReference type="NCBIfam" id="TIGR01061">
    <property type="entry name" value="parC_Gpos"/>
    <property type="match status" value="1"/>
</dbReference>
<dbReference type="NCBIfam" id="NF004044">
    <property type="entry name" value="PRK05561.1"/>
    <property type="match status" value="1"/>
</dbReference>
<dbReference type="PANTHER" id="PTHR43493">
    <property type="entry name" value="DNA GYRASE/TOPOISOMERASE SUBUNIT A"/>
    <property type="match status" value="1"/>
</dbReference>
<dbReference type="PANTHER" id="PTHR43493:SF9">
    <property type="entry name" value="DNA TOPOISOMERASE 4 SUBUNIT A"/>
    <property type="match status" value="1"/>
</dbReference>
<dbReference type="Pfam" id="PF03989">
    <property type="entry name" value="DNA_gyraseA_C"/>
    <property type="match status" value="5"/>
</dbReference>
<dbReference type="Pfam" id="PF00521">
    <property type="entry name" value="DNA_topoisoIV"/>
    <property type="match status" value="1"/>
</dbReference>
<dbReference type="SMART" id="SM00434">
    <property type="entry name" value="TOP4c"/>
    <property type="match status" value="1"/>
</dbReference>
<dbReference type="SUPFAM" id="SSF101904">
    <property type="entry name" value="GyrA/ParC C-terminal domain-like"/>
    <property type="match status" value="1"/>
</dbReference>
<dbReference type="SUPFAM" id="SSF56719">
    <property type="entry name" value="Type II DNA topoisomerase"/>
    <property type="match status" value="1"/>
</dbReference>
<dbReference type="PROSITE" id="PS52040">
    <property type="entry name" value="TOPO_IIA"/>
    <property type="match status" value="1"/>
</dbReference>
<protein>
    <recommendedName>
        <fullName evidence="1">DNA topoisomerase 4 subunit A</fullName>
        <ecNumber evidence="1">5.6.2.2</ecNumber>
    </recommendedName>
    <alternativeName>
        <fullName evidence="1">Topoisomerase IV subunit A</fullName>
    </alternativeName>
</protein>
<keyword id="KW-1003">Cell membrane</keyword>
<keyword id="KW-0238">DNA-binding</keyword>
<keyword id="KW-0413">Isomerase</keyword>
<keyword id="KW-0472">Membrane</keyword>
<keyword id="KW-0799">Topoisomerase</keyword>